<gene>
    <name evidence="1" type="primary">atpF</name>
    <name type="ordered locus">MmarC5_0550</name>
</gene>
<comment type="function">
    <text evidence="1">Component of the A-type ATP synthase that produces ATP from ADP in the presence of a proton gradient across the membrane.</text>
</comment>
<comment type="subunit">
    <text evidence="1">Has multiple subunits with at least A(3), B(3), C, D, E, F, H, I and proteolipid K(x).</text>
</comment>
<comment type="subcellular location">
    <subcellularLocation>
        <location evidence="1">Cell membrane</location>
        <topology evidence="1">Peripheral membrane protein</topology>
    </subcellularLocation>
</comment>
<comment type="similarity">
    <text evidence="1">Belongs to the V-ATPase F subunit family.</text>
</comment>
<proteinExistence type="inferred from homology"/>
<feature type="chain" id="PRO_1000059431" description="A-type ATP synthase subunit F">
    <location>
        <begin position="1"/>
        <end position="99"/>
    </location>
</feature>
<protein>
    <recommendedName>
        <fullName evidence="1">A-type ATP synthase subunit F</fullName>
    </recommendedName>
</protein>
<name>AATF_METM5</name>
<organism>
    <name type="scientific">Methanococcus maripaludis (strain C5 / ATCC BAA-1333)</name>
    <dbReference type="NCBI Taxonomy" id="402880"/>
    <lineage>
        <taxon>Archaea</taxon>
        <taxon>Methanobacteriati</taxon>
        <taxon>Methanobacteriota</taxon>
        <taxon>Methanomada group</taxon>
        <taxon>Methanococci</taxon>
        <taxon>Methanococcales</taxon>
        <taxon>Methanococcaceae</taxon>
        <taxon>Methanococcus</taxon>
    </lineage>
</organism>
<sequence length="99" mass="10677">MRIGVVGDPDVVVGFRLAGLTDVYEVKSPEQAAKAIEELNSNSEIGLIITTERIGEQVRDTISAVKKVVVEVPDKNGPIVRENDPVKVLVRNAVGVDIK</sequence>
<evidence type="ECO:0000255" key="1">
    <source>
        <dbReference type="HAMAP-Rule" id="MF_00312"/>
    </source>
</evidence>
<keyword id="KW-0066">ATP synthesis</keyword>
<keyword id="KW-1003">Cell membrane</keyword>
<keyword id="KW-0375">Hydrogen ion transport</keyword>
<keyword id="KW-0406">Ion transport</keyword>
<keyword id="KW-0472">Membrane</keyword>
<keyword id="KW-0813">Transport</keyword>
<accession>A4FXD5</accession>
<reference key="1">
    <citation type="submission" date="2007-03" db="EMBL/GenBank/DDBJ databases">
        <title>Complete sequence of chromosome of Methanococcus maripaludis C5.</title>
        <authorList>
            <consortium name="US DOE Joint Genome Institute"/>
            <person name="Copeland A."/>
            <person name="Lucas S."/>
            <person name="Lapidus A."/>
            <person name="Barry K."/>
            <person name="Glavina del Rio T."/>
            <person name="Dalin E."/>
            <person name="Tice H."/>
            <person name="Pitluck S."/>
            <person name="Chertkov O."/>
            <person name="Brettin T."/>
            <person name="Bruce D."/>
            <person name="Han C."/>
            <person name="Detter J.C."/>
            <person name="Schmutz J."/>
            <person name="Larimer F."/>
            <person name="Land M."/>
            <person name="Hauser L."/>
            <person name="Kyrpides N."/>
            <person name="Mikhailova N."/>
            <person name="Sieprawska-Lupa M."/>
            <person name="Whitman W.B."/>
            <person name="Richardson P."/>
        </authorList>
    </citation>
    <scope>NUCLEOTIDE SEQUENCE [LARGE SCALE GENOMIC DNA]</scope>
    <source>
        <strain>C5 / ATCC BAA-1333</strain>
    </source>
</reference>
<dbReference type="EMBL" id="CP000609">
    <property type="protein sequence ID" value="ABO34864.1"/>
    <property type="molecule type" value="Genomic_DNA"/>
</dbReference>
<dbReference type="RefSeq" id="WP_011868319.1">
    <property type="nucleotide sequence ID" value="NC_009135.1"/>
</dbReference>
<dbReference type="SMR" id="A4FXD5"/>
<dbReference type="STRING" id="402880.MmarC5_0550"/>
<dbReference type="GeneID" id="4928214"/>
<dbReference type="KEGG" id="mmq:MmarC5_0550"/>
<dbReference type="eggNOG" id="arCOG04102">
    <property type="taxonomic scope" value="Archaea"/>
</dbReference>
<dbReference type="HOGENOM" id="CLU_135754_2_2_2"/>
<dbReference type="OrthoDB" id="24971at2157"/>
<dbReference type="Proteomes" id="UP000000253">
    <property type="component" value="Chromosome"/>
</dbReference>
<dbReference type="GO" id="GO:0005886">
    <property type="term" value="C:plasma membrane"/>
    <property type="evidence" value="ECO:0007669"/>
    <property type="project" value="UniProtKB-SubCell"/>
</dbReference>
<dbReference type="GO" id="GO:0005524">
    <property type="term" value="F:ATP binding"/>
    <property type="evidence" value="ECO:0007669"/>
    <property type="project" value="UniProtKB-UniRule"/>
</dbReference>
<dbReference type="GO" id="GO:0046933">
    <property type="term" value="F:proton-transporting ATP synthase activity, rotational mechanism"/>
    <property type="evidence" value="ECO:0007669"/>
    <property type="project" value="UniProtKB-UniRule"/>
</dbReference>
<dbReference type="GO" id="GO:0046961">
    <property type="term" value="F:proton-transporting ATPase activity, rotational mechanism"/>
    <property type="evidence" value="ECO:0007669"/>
    <property type="project" value="InterPro"/>
</dbReference>
<dbReference type="GO" id="GO:0042777">
    <property type="term" value="P:proton motive force-driven plasma membrane ATP synthesis"/>
    <property type="evidence" value="ECO:0007669"/>
    <property type="project" value="UniProtKB-UniRule"/>
</dbReference>
<dbReference type="Gene3D" id="3.40.50.10580">
    <property type="entry name" value="ATPase, V1 complex, subunit F"/>
    <property type="match status" value="1"/>
</dbReference>
<dbReference type="HAMAP" id="MF_00312">
    <property type="entry name" value="ATP_synth_F_arch"/>
    <property type="match status" value="1"/>
</dbReference>
<dbReference type="InterPro" id="IPR008218">
    <property type="entry name" value="ATPase_V1-cplx_f_g_su"/>
</dbReference>
<dbReference type="InterPro" id="IPR022944">
    <property type="entry name" value="ATPase_V1-cplx_fsu_bac/arc"/>
</dbReference>
<dbReference type="InterPro" id="IPR036906">
    <property type="entry name" value="ATPase_V1_fsu_sf"/>
</dbReference>
<dbReference type="NCBIfam" id="NF003047">
    <property type="entry name" value="PRK03957.1"/>
    <property type="match status" value="1"/>
</dbReference>
<dbReference type="Pfam" id="PF01990">
    <property type="entry name" value="ATP-synt_F"/>
    <property type="match status" value="1"/>
</dbReference>
<dbReference type="SUPFAM" id="SSF159468">
    <property type="entry name" value="AtpF-like"/>
    <property type="match status" value="1"/>
</dbReference>